<comment type="subcellular location">
    <subcellularLocation>
        <location evidence="1">Cytoplasm</location>
    </subcellularLocation>
</comment>
<comment type="similarity">
    <text evidence="1">Belongs to the UPF0294 family.</text>
</comment>
<feature type="chain" id="PRO_0000074645" description="UPF0294 protein VP2298">
    <location>
        <begin position="1"/>
        <end position="281"/>
    </location>
</feature>
<gene>
    <name type="ordered locus">VP2298</name>
</gene>
<organism>
    <name type="scientific">Vibrio parahaemolyticus serotype O3:K6 (strain RIMD 2210633)</name>
    <dbReference type="NCBI Taxonomy" id="223926"/>
    <lineage>
        <taxon>Bacteria</taxon>
        <taxon>Pseudomonadati</taxon>
        <taxon>Pseudomonadota</taxon>
        <taxon>Gammaproteobacteria</taxon>
        <taxon>Vibrionales</taxon>
        <taxon>Vibrionaceae</taxon>
        <taxon>Vibrio</taxon>
    </lineage>
</organism>
<evidence type="ECO:0000255" key="1">
    <source>
        <dbReference type="HAMAP-Rule" id="MF_01119"/>
    </source>
</evidence>
<name>Y2298_VIBPA</name>
<sequence length="281" mass="31481">MFKRFVLSLAFLIMAAVVSFQVIFTVPEHPQIITQTGSEITEDIRCIEFSGAKALDDNGELNLLVWNIYKQNRANWQSELELFSADKQLLLLQEASMTDSFKQWLVDGSWVSNQVSAFKALGSGAGVISIAQKQPIKACAYTSKEPWLRLPKSALYSQYRLSNGESLAVINVHAINFTVGTEEYTSQLSALETLLKQHSGPIVFAGDFNSWSEYRITAMKQALREANLREVQFSPDHRTQFITGLPLDHVFYRGLTLKNAKAPQSDASDHNPLLVSFTLND</sequence>
<reference key="1">
    <citation type="journal article" date="2003" name="Lancet">
        <title>Genome sequence of Vibrio parahaemolyticus: a pathogenic mechanism distinct from that of V. cholerae.</title>
        <authorList>
            <person name="Makino K."/>
            <person name="Oshima K."/>
            <person name="Kurokawa K."/>
            <person name="Yokoyama K."/>
            <person name="Uda T."/>
            <person name="Tagomori K."/>
            <person name="Iijima Y."/>
            <person name="Najima M."/>
            <person name="Nakano M."/>
            <person name="Yamashita A."/>
            <person name="Kubota Y."/>
            <person name="Kimura S."/>
            <person name="Yasunaga T."/>
            <person name="Honda T."/>
            <person name="Shinagawa H."/>
            <person name="Hattori M."/>
            <person name="Iida T."/>
        </authorList>
    </citation>
    <scope>NUCLEOTIDE SEQUENCE [LARGE SCALE GENOMIC DNA]</scope>
    <source>
        <strain>RIMD 2210633</strain>
    </source>
</reference>
<keyword id="KW-0963">Cytoplasm</keyword>
<proteinExistence type="inferred from homology"/>
<protein>
    <recommendedName>
        <fullName evidence="1">UPF0294 protein VP2298</fullName>
    </recommendedName>
</protein>
<accession>Q87MF7</accession>
<dbReference type="EMBL" id="BA000031">
    <property type="protein sequence ID" value="BAC60561.1"/>
    <property type="molecule type" value="Genomic_DNA"/>
</dbReference>
<dbReference type="RefSeq" id="NP_798677.1">
    <property type="nucleotide sequence ID" value="NC_004603.1"/>
</dbReference>
<dbReference type="RefSeq" id="WP_005456741.1">
    <property type="nucleotide sequence ID" value="NC_004603.1"/>
</dbReference>
<dbReference type="SMR" id="Q87MF7"/>
<dbReference type="GeneID" id="1189811"/>
<dbReference type="KEGG" id="vpa:VP2298"/>
<dbReference type="PATRIC" id="fig|223926.6.peg.2200"/>
<dbReference type="eggNOG" id="COG3021">
    <property type="taxonomic scope" value="Bacteria"/>
</dbReference>
<dbReference type="HOGENOM" id="CLU_083563_0_0_6"/>
<dbReference type="Proteomes" id="UP000002493">
    <property type="component" value="Chromosome 1"/>
</dbReference>
<dbReference type="GO" id="GO:0005737">
    <property type="term" value="C:cytoplasm"/>
    <property type="evidence" value="ECO:0007669"/>
    <property type="project" value="UniProtKB-SubCell"/>
</dbReference>
<dbReference type="GO" id="GO:0003824">
    <property type="term" value="F:catalytic activity"/>
    <property type="evidence" value="ECO:0007669"/>
    <property type="project" value="InterPro"/>
</dbReference>
<dbReference type="Gene3D" id="3.60.10.10">
    <property type="entry name" value="Endonuclease/exonuclease/phosphatase"/>
    <property type="match status" value="1"/>
</dbReference>
<dbReference type="HAMAP" id="MF_01119">
    <property type="entry name" value="UPF0294"/>
    <property type="match status" value="1"/>
</dbReference>
<dbReference type="InterPro" id="IPR036691">
    <property type="entry name" value="Endo/exonu/phosph_ase_sf"/>
</dbReference>
<dbReference type="InterPro" id="IPR005135">
    <property type="entry name" value="Endo/exonuclease/phosphatase"/>
</dbReference>
<dbReference type="InterPro" id="IPR022958">
    <property type="entry name" value="UPF0294"/>
</dbReference>
<dbReference type="NCBIfam" id="NF003840">
    <property type="entry name" value="PRK05421.1-2"/>
    <property type="match status" value="1"/>
</dbReference>
<dbReference type="NCBIfam" id="NF003841">
    <property type="entry name" value="PRK05421.1-3"/>
    <property type="match status" value="1"/>
</dbReference>
<dbReference type="NCBIfam" id="NF003842">
    <property type="entry name" value="PRK05421.1-4"/>
    <property type="match status" value="1"/>
</dbReference>
<dbReference type="Pfam" id="PF03372">
    <property type="entry name" value="Exo_endo_phos"/>
    <property type="match status" value="1"/>
</dbReference>
<dbReference type="SUPFAM" id="SSF56219">
    <property type="entry name" value="DNase I-like"/>
    <property type="match status" value="1"/>
</dbReference>